<proteinExistence type="inferred from homology"/>
<accession>P0CR06</accession>
<accession>Q55X53</accession>
<accession>Q5KMS9</accession>
<dbReference type="EC" id="3.6.4.13"/>
<dbReference type="EMBL" id="AE017342">
    <property type="protein sequence ID" value="AAW41764.1"/>
    <property type="molecule type" value="Genomic_DNA"/>
</dbReference>
<dbReference type="RefSeq" id="XP_569071.1">
    <property type="nucleotide sequence ID" value="XM_569071.1"/>
</dbReference>
<dbReference type="SMR" id="P0CR06"/>
<dbReference type="FunCoup" id="P0CR06">
    <property type="interactions" value="706"/>
</dbReference>
<dbReference type="STRING" id="214684.P0CR06"/>
<dbReference type="PaxDb" id="214684-P0CR06"/>
<dbReference type="EnsemblFungi" id="AAW41764">
    <property type="protein sequence ID" value="AAW41764"/>
    <property type="gene ID" value="CNB00610"/>
</dbReference>
<dbReference type="GeneID" id="3255702"/>
<dbReference type="KEGG" id="cne:CNB00610"/>
<dbReference type="VEuPathDB" id="FungiDB:CNB00610"/>
<dbReference type="eggNOG" id="KOG0337">
    <property type="taxonomic scope" value="Eukaryota"/>
</dbReference>
<dbReference type="HOGENOM" id="CLU_003041_5_2_1"/>
<dbReference type="InParanoid" id="P0CR06"/>
<dbReference type="OMA" id="EDQFGMM"/>
<dbReference type="OrthoDB" id="10261375at2759"/>
<dbReference type="Proteomes" id="UP000002149">
    <property type="component" value="Chromosome 2"/>
</dbReference>
<dbReference type="GO" id="GO:0005730">
    <property type="term" value="C:nucleolus"/>
    <property type="evidence" value="ECO:0000318"/>
    <property type="project" value="GO_Central"/>
</dbReference>
<dbReference type="GO" id="GO:0005524">
    <property type="term" value="F:ATP binding"/>
    <property type="evidence" value="ECO:0007669"/>
    <property type="project" value="UniProtKB-KW"/>
</dbReference>
<dbReference type="GO" id="GO:0016887">
    <property type="term" value="F:ATP hydrolysis activity"/>
    <property type="evidence" value="ECO:0007669"/>
    <property type="project" value="RHEA"/>
</dbReference>
<dbReference type="GO" id="GO:0003723">
    <property type="term" value="F:RNA binding"/>
    <property type="evidence" value="ECO:0007669"/>
    <property type="project" value="UniProtKB-KW"/>
</dbReference>
<dbReference type="GO" id="GO:0003724">
    <property type="term" value="F:RNA helicase activity"/>
    <property type="evidence" value="ECO:0007669"/>
    <property type="project" value="UniProtKB-EC"/>
</dbReference>
<dbReference type="GO" id="GO:0006364">
    <property type="term" value="P:rRNA processing"/>
    <property type="evidence" value="ECO:0000318"/>
    <property type="project" value="GO_Central"/>
</dbReference>
<dbReference type="CDD" id="cd18787">
    <property type="entry name" value="SF2_C_DEAD"/>
    <property type="match status" value="1"/>
</dbReference>
<dbReference type="Gene3D" id="3.40.50.300">
    <property type="entry name" value="P-loop containing nucleotide triphosphate hydrolases"/>
    <property type="match status" value="2"/>
</dbReference>
<dbReference type="InterPro" id="IPR012541">
    <property type="entry name" value="DBP10_C"/>
</dbReference>
<dbReference type="InterPro" id="IPR011545">
    <property type="entry name" value="DEAD/DEAH_box_helicase_dom"/>
</dbReference>
<dbReference type="InterPro" id="IPR050079">
    <property type="entry name" value="DEAD_box_RNA_helicase"/>
</dbReference>
<dbReference type="InterPro" id="IPR014001">
    <property type="entry name" value="Helicase_ATP-bd"/>
</dbReference>
<dbReference type="InterPro" id="IPR001650">
    <property type="entry name" value="Helicase_C-like"/>
</dbReference>
<dbReference type="InterPro" id="IPR027417">
    <property type="entry name" value="P-loop_NTPase"/>
</dbReference>
<dbReference type="PANTHER" id="PTHR47959">
    <property type="entry name" value="ATP-DEPENDENT RNA HELICASE RHLE-RELATED"/>
    <property type="match status" value="1"/>
</dbReference>
<dbReference type="PANTHER" id="PTHR47959:SF8">
    <property type="entry name" value="RNA HELICASE"/>
    <property type="match status" value="1"/>
</dbReference>
<dbReference type="Pfam" id="PF08147">
    <property type="entry name" value="DBP10CT"/>
    <property type="match status" value="1"/>
</dbReference>
<dbReference type="Pfam" id="PF00270">
    <property type="entry name" value="DEAD"/>
    <property type="match status" value="1"/>
</dbReference>
<dbReference type="Pfam" id="PF00271">
    <property type="entry name" value="Helicase_C"/>
    <property type="match status" value="1"/>
</dbReference>
<dbReference type="SMART" id="SM01123">
    <property type="entry name" value="DBP10CT"/>
    <property type="match status" value="1"/>
</dbReference>
<dbReference type="SMART" id="SM00487">
    <property type="entry name" value="DEXDc"/>
    <property type="match status" value="1"/>
</dbReference>
<dbReference type="SMART" id="SM00490">
    <property type="entry name" value="HELICc"/>
    <property type="match status" value="1"/>
</dbReference>
<dbReference type="SUPFAM" id="SSF52540">
    <property type="entry name" value="P-loop containing nucleoside triphosphate hydrolases"/>
    <property type="match status" value="1"/>
</dbReference>
<dbReference type="PROSITE" id="PS51192">
    <property type="entry name" value="HELICASE_ATP_BIND_1"/>
    <property type="match status" value="1"/>
</dbReference>
<dbReference type="PROSITE" id="PS51194">
    <property type="entry name" value="HELICASE_CTER"/>
    <property type="match status" value="1"/>
</dbReference>
<dbReference type="PROSITE" id="PS51195">
    <property type="entry name" value="Q_MOTIF"/>
    <property type="match status" value="1"/>
</dbReference>
<evidence type="ECO:0000250" key="1"/>
<evidence type="ECO:0000255" key="2">
    <source>
        <dbReference type="PROSITE-ProRule" id="PRU00541"/>
    </source>
</evidence>
<evidence type="ECO:0000255" key="3">
    <source>
        <dbReference type="PROSITE-ProRule" id="PRU00542"/>
    </source>
</evidence>
<evidence type="ECO:0000256" key="4">
    <source>
        <dbReference type="SAM" id="MobiDB-lite"/>
    </source>
</evidence>
<evidence type="ECO:0000305" key="5"/>
<name>DBP10_CRYNJ</name>
<gene>
    <name type="primary">DBP10</name>
    <name type="ordered locus">CNB00610</name>
</gene>
<reference key="1">
    <citation type="journal article" date="2005" name="Science">
        <title>The genome of the basidiomycetous yeast and human pathogen Cryptococcus neoformans.</title>
        <authorList>
            <person name="Loftus B.J."/>
            <person name="Fung E."/>
            <person name="Roncaglia P."/>
            <person name="Rowley D."/>
            <person name="Amedeo P."/>
            <person name="Bruno D."/>
            <person name="Vamathevan J."/>
            <person name="Miranda M."/>
            <person name="Anderson I.J."/>
            <person name="Fraser J.A."/>
            <person name="Allen J.E."/>
            <person name="Bosdet I.E."/>
            <person name="Brent M.R."/>
            <person name="Chiu R."/>
            <person name="Doering T.L."/>
            <person name="Donlin M.J."/>
            <person name="D'Souza C.A."/>
            <person name="Fox D.S."/>
            <person name="Grinberg V."/>
            <person name="Fu J."/>
            <person name="Fukushima M."/>
            <person name="Haas B.J."/>
            <person name="Huang J.C."/>
            <person name="Janbon G."/>
            <person name="Jones S.J.M."/>
            <person name="Koo H.L."/>
            <person name="Krzywinski M.I."/>
            <person name="Kwon-Chung K.J."/>
            <person name="Lengeler K.B."/>
            <person name="Maiti R."/>
            <person name="Marra M.A."/>
            <person name="Marra R.E."/>
            <person name="Mathewson C.A."/>
            <person name="Mitchell T.G."/>
            <person name="Pertea M."/>
            <person name="Riggs F.R."/>
            <person name="Salzberg S.L."/>
            <person name="Schein J.E."/>
            <person name="Shvartsbeyn A."/>
            <person name="Shin H."/>
            <person name="Shumway M."/>
            <person name="Specht C.A."/>
            <person name="Suh B.B."/>
            <person name="Tenney A."/>
            <person name="Utterback T.R."/>
            <person name="Wickes B.L."/>
            <person name="Wortman J.R."/>
            <person name="Wye N.H."/>
            <person name="Kronstad J.W."/>
            <person name="Lodge J.K."/>
            <person name="Heitman J."/>
            <person name="Davis R.W."/>
            <person name="Fraser C.M."/>
            <person name="Hyman R.W."/>
        </authorList>
    </citation>
    <scope>NUCLEOTIDE SEQUENCE [LARGE SCALE GENOMIC DNA]</scope>
    <source>
        <strain>JEC21 / ATCC MYA-565</strain>
    </source>
</reference>
<protein>
    <recommendedName>
        <fullName>ATP-dependent RNA helicase DBP10</fullName>
        <ecNumber>3.6.4.13</ecNumber>
    </recommendedName>
</protein>
<sequence length="802" mass="88290">MAAITPSWALETTADGEVKEKTSGPGGQWRALNVGPDLIRSLLIRKFKTPTPIQRAAIPPALSTPPRDILGMARTGSGKTLAYLIPLLQRTGSTHHGQGPRALILCPSRELAVQIYTVGKDLARGMNKGKGKGKNKNEDEEDEEGKGKEGLRWALIIGGEGMDAQFEKMSSNPDIVIATPGRFLHLIVEMHMDLRHLQTVIYDEADRLFEMGFDVQLQEILHRLPSTRQNLLFSATLPSSVAEFAKAGLVNPLLVRLDAEQKISPDLALKFFSVKPGEKEASLLVLLREVIGKPNQPEPADPSSAPQAIVFVATKHHVDYVAELLRTTGYRTSLIYSSLDQVARQQQLAGFRSHQSDVLVVTDVAARGLDIPIMDHVINYDFPAGPRIFVHRVGRTARAGRKGTAYSLIVKEDFPYLCDLHTFLGTERMGEPADVLRSLPIEQLSENVEYVFHNLDETAPHITALRNVMRKGQGMFERSRTKANPTSYRQAKSLASALSNNPPRIDDMFEDAMEVEVNEEKARLLAKVAAFTPSETVFEVGKRESESAIIMKKRRKTVDERQKRVSKAEAEKSTASGMEKAPVKELPAPQLPSKNFKDPSFYLDHTQRGAEAEKGYSLKSGVESLSGAITDMTADEGTGPKAQKASQLSWDRKKHKFIKKNGSADGEKMIKSESGALLPASYSSGKYQEWKSKRRHMPDGPVEALALGGGRRGRHGPPGQKRKAEDGDGGEDAGGKGRKDQGKSKGTGKGKDDFKQKSPGKPGKKGIKQSSGLKSAMDIRKQREIAQKRKEKNARKPQKFRK</sequence>
<organism>
    <name type="scientific">Cryptococcus neoformans var. neoformans serotype D (strain JEC21 / ATCC MYA-565)</name>
    <name type="common">Filobasidiella neoformans</name>
    <dbReference type="NCBI Taxonomy" id="214684"/>
    <lineage>
        <taxon>Eukaryota</taxon>
        <taxon>Fungi</taxon>
        <taxon>Dikarya</taxon>
        <taxon>Basidiomycota</taxon>
        <taxon>Agaricomycotina</taxon>
        <taxon>Tremellomycetes</taxon>
        <taxon>Tremellales</taxon>
        <taxon>Cryptococcaceae</taxon>
        <taxon>Cryptococcus</taxon>
        <taxon>Cryptococcus neoformans species complex</taxon>
    </lineage>
</organism>
<feature type="chain" id="PRO_0000232313" description="ATP-dependent RNA helicase DBP10">
    <location>
        <begin position="1"/>
        <end position="802"/>
    </location>
</feature>
<feature type="domain" description="Helicase ATP-binding" evidence="2">
    <location>
        <begin position="60"/>
        <end position="255"/>
    </location>
</feature>
<feature type="domain" description="Helicase C-terminal" evidence="3">
    <location>
        <begin position="286"/>
        <end position="447"/>
    </location>
</feature>
<feature type="region of interest" description="Disordered" evidence="4">
    <location>
        <begin position="126"/>
        <end position="147"/>
    </location>
</feature>
<feature type="region of interest" description="Disordered" evidence="4">
    <location>
        <begin position="555"/>
        <end position="596"/>
    </location>
</feature>
<feature type="region of interest" description="Disordered" evidence="4">
    <location>
        <begin position="632"/>
        <end position="802"/>
    </location>
</feature>
<feature type="short sequence motif" description="Q motif">
    <location>
        <begin position="27"/>
        <end position="55"/>
    </location>
</feature>
<feature type="short sequence motif" description="DEAD box">
    <location>
        <begin position="203"/>
        <end position="206"/>
    </location>
</feature>
<feature type="compositionally biased region" description="Basic and acidic residues" evidence="4">
    <location>
        <begin position="557"/>
        <end position="572"/>
    </location>
</feature>
<feature type="compositionally biased region" description="Basic and acidic residues" evidence="4">
    <location>
        <begin position="733"/>
        <end position="756"/>
    </location>
</feature>
<feature type="compositionally biased region" description="Basic and acidic residues" evidence="4">
    <location>
        <begin position="777"/>
        <end position="788"/>
    </location>
</feature>
<feature type="compositionally biased region" description="Basic residues" evidence="4">
    <location>
        <begin position="789"/>
        <end position="802"/>
    </location>
</feature>
<feature type="binding site" evidence="2">
    <location>
        <begin position="73"/>
        <end position="80"/>
    </location>
    <ligand>
        <name>ATP</name>
        <dbReference type="ChEBI" id="CHEBI:30616"/>
    </ligand>
</feature>
<comment type="function">
    <text evidence="1">ATP-binding RNA helicase involved in the biogenesis of 60S ribosomal subunits and is required for the normal formation of 25S and 5.8S rRNAs.</text>
</comment>
<comment type="catalytic activity">
    <reaction>
        <text>ATP + H2O = ADP + phosphate + H(+)</text>
        <dbReference type="Rhea" id="RHEA:13065"/>
        <dbReference type="ChEBI" id="CHEBI:15377"/>
        <dbReference type="ChEBI" id="CHEBI:15378"/>
        <dbReference type="ChEBI" id="CHEBI:30616"/>
        <dbReference type="ChEBI" id="CHEBI:43474"/>
        <dbReference type="ChEBI" id="CHEBI:456216"/>
        <dbReference type="EC" id="3.6.4.13"/>
    </reaction>
</comment>
<comment type="subcellular location">
    <subcellularLocation>
        <location evidence="1">Nucleus</location>
        <location evidence="1">Nucleolus</location>
    </subcellularLocation>
</comment>
<comment type="domain">
    <text>The Q motif is unique to and characteristic of the DEAD box family of RNA helicases and controls ATP binding and hydrolysis.</text>
</comment>
<comment type="similarity">
    <text evidence="5">Belongs to the DEAD box helicase family. DDX54/DBP10 subfamily.</text>
</comment>
<keyword id="KW-0067">ATP-binding</keyword>
<keyword id="KW-0347">Helicase</keyword>
<keyword id="KW-0378">Hydrolase</keyword>
<keyword id="KW-0547">Nucleotide-binding</keyword>
<keyword id="KW-0539">Nucleus</keyword>
<keyword id="KW-1185">Reference proteome</keyword>
<keyword id="KW-0690">Ribosome biogenesis</keyword>
<keyword id="KW-0694">RNA-binding</keyword>
<keyword id="KW-0698">rRNA processing</keyword>